<comment type="function">
    <text evidence="1">Part of the ABC transporter complex MglABC involved in galactose/methyl galactoside import. Responsible for energy coupling to the transport system.</text>
</comment>
<comment type="catalytic activity">
    <reaction evidence="1">
        <text>D-galactose(out) + ATP + H2O = D-galactose(in) + ADP + phosphate + H(+)</text>
        <dbReference type="Rhea" id="RHEA:60156"/>
        <dbReference type="ChEBI" id="CHEBI:4139"/>
        <dbReference type="ChEBI" id="CHEBI:15377"/>
        <dbReference type="ChEBI" id="CHEBI:15378"/>
        <dbReference type="ChEBI" id="CHEBI:30616"/>
        <dbReference type="ChEBI" id="CHEBI:43474"/>
        <dbReference type="ChEBI" id="CHEBI:456216"/>
        <dbReference type="EC" id="7.5.2.11"/>
    </reaction>
    <physiologicalReaction direction="left-to-right" evidence="1">
        <dbReference type="Rhea" id="RHEA:60157"/>
    </physiologicalReaction>
</comment>
<comment type="catalytic activity">
    <reaction evidence="1">
        <text>methyl beta-D-galactoside(out) + ATP + H2O = methyl beta-D-galactoside(in) + ADP + phosphate + H(+)</text>
        <dbReference type="Rhea" id="RHEA:72531"/>
        <dbReference type="ChEBI" id="CHEBI:15377"/>
        <dbReference type="ChEBI" id="CHEBI:15378"/>
        <dbReference type="ChEBI" id="CHEBI:17540"/>
        <dbReference type="ChEBI" id="CHEBI:30616"/>
        <dbReference type="ChEBI" id="CHEBI:43474"/>
        <dbReference type="ChEBI" id="CHEBI:456216"/>
    </reaction>
    <physiologicalReaction direction="left-to-right" evidence="1">
        <dbReference type="Rhea" id="RHEA:72532"/>
    </physiologicalReaction>
</comment>
<comment type="subunit">
    <text evidence="1">The complex is composed of one ATP-binding protein (MglA), two transmembrane proteins (MglC) and a solute-binding protein (MglB).</text>
</comment>
<comment type="subcellular location">
    <subcellularLocation>
        <location evidence="1">Cell inner membrane</location>
        <topology evidence="1">Peripheral membrane protein</topology>
    </subcellularLocation>
</comment>
<comment type="similarity">
    <text evidence="1">Belongs to the ABC transporter superfamily. Galactose/methyl galactoside importer (TC 3.A.1.2.3) family.</text>
</comment>
<name>MGLA_YERPA</name>
<feature type="chain" id="PRO_0000261381" description="Galactose/methyl galactoside import ATP-binding protein MglA">
    <location>
        <begin position="1"/>
        <end position="506"/>
    </location>
</feature>
<feature type="domain" description="ABC transporter 1" evidence="1">
    <location>
        <begin position="14"/>
        <end position="249"/>
    </location>
</feature>
<feature type="domain" description="ABC transporter 2" evidence="1">
    <location>
        <begin position="264"/>
        <end position="506"/>
    </location>
</feature>
<feature type="binding site" evidence="1">
    <location>
        <begin position="46"/>
        <end position="53"/>
    </location>
    <ligand>
        <name>ATP</name>
        <dbReference type="ChEBI" id="CHEBI:30616"/>
    </ligand>
</feature>
<protein>
    <recommendedName>
        <fullName evidence="1">Galactose/methyl galactoside import ATP-binding protein MglA</fullName>
        <ecNumber evidence="1">7.5.2.11</ecNumber>
    </recommendedName>
</protein>
<organism>
    <name type="scientific">Yersinia pestis bv. Antiqua (strain Antiqua)</name>
    <dbReference type="NCBI Taxonomy" id="360102"/>
    <lineage>
        <taxon>Bacteria</taxon>
        <taxon>Pseudomonadati</taxon>
        <taxon>Pseudomonadota</taxon>
        <taxon>Gammaproteobacteria</taxon>
        <taxon>Enterobacterales</taxon>
        <taxon>Yersiniaceae</taxon>
        <taxon>Yersinia</taxon>
    </lineage>
</organism>
<evidence type="ECO:0000255" key="1">
    <source>
        <dbReference type="HAMAP-Rule" id="MF_01717"/>
    </source>
</evidence>
<accession>Q1C9V1</accession>
<dbReference type="EC" id="7.5.2.11" evidence="1"/>
<dbReference type="EMBL" id="CP000308">
    <property type="protein sequence ID" value="ABG12771.1"/>
    <property type="molecule type" value="Genomic_DNA"/>
</dbReference>
<dbReference type="RefSeq" id="WP_002211964.1">
    <property type="nucleotide sequence ID" value="NZ_CP009906.1"/>
</dbReference>
<dbReference type="SMR" id="Q1C9V1"/>
<dbReference type="GeneID" id="57977060"/>
<dbReference type="KEGG" id="ypa:YPA_0803"/>
<dbReference type="Proteomes" id="UP000001971">
    <property type="component" value="Chromosome"/>
</dbReference>
<dbReference type="GO" id="GO:0005886">
    <property type="term" value="C:plasma membrane"/>
    <property type="evidence" value="ECO:0007669"/>
    <property type="project" value="UniProtKB-SubCell"/>
</dbReference>
<dbReference type="GO" id="GO:0005524">
    <property type="term" value="F:ATP binding"/>
    <property type="evidence" value="ECO:0007669"/>
    <property type="project" value="UniProtKB-KW"/>
</dbReference>
<dbReference type="GO" id="GO:0016887">
    <property type="term" value="F:ATP hydrolysis activity"/>
    <property type="evidence" value="ECO:0007669"/>
    <property type="project" value="InterPro"/>
</dbReference>
<dbReference type="CDD" id="cd03216">
    <property type="entry name" value="ABC_Carb_Monos_I"/>
    <property type="match status" value="1"/>
</dbReference>
<dbReference type="CDD" id="cd03215">
    <property type="entry name" value="ABC_Carb_Monos_II"/>
    <property type="match status" value="1"/>
</dbReference>
<dbReference type="FunFam" id="3.40.50.300:FF:000126">
    <property type="entry name" value="Galactose/methyl galactoside import ATP-binding protein MglA"/>
    <property type="match status" value="1"/>
</dbReference>
<dbReference type="FunFam" id="3.40.50.300:FF:000127">
    <property type="entry name" value="Ribose import ATP-binding protein RbsA"/>
    <property type="match status" value="1"/>
</dbReference>
<dbReference type="Gene3D" id="3.40.50.300">
    <property type="entry name" value="P-loop containing nucleotide triphosphate hydrolases"/>
    <property type="match status" value="2"/>
</dbReference>
<dbReference type="InterPro" id="IPR003593">
    <property type="entry name" value="AAA+_ATPase"/>
</dbReference>
<dbReference type="InterPro" id="IPR050107">
    <property type="entry name" value="ABC_carbohydrate_import_ATPase"/>
</dbReference>
<dbReference type="InterPro" id="IPR003439">
    <property type="entry name" value="ABC_transporter-like_ATP-bd"/>
</dbReference>
<dbReference type="InterPro" id="IPR017871">
    <property type="entry name" value="ABC_transporter-like_CS"/>
</dbReference>
<dbReference type="InterPro" id="IPR027417">
    <property type="entry name" value="P-loop_NTPase"/>
</dbReference>
<dbReference type="NCBIfam" id="NF008215">
    <property type="entry name" value="PRK10982.1"/>
    <property type="match status" value="1"/>
</dbReference>
<dbReference type="PANTHER" id="PTHR43790">
    <property type="entry name" value="CARBOHYDRATE TRANSPORT ATP-BINDING PROTEIN MG119-RELATED"/>
    <property type="match status" value="1"/>
</dbReference>
<dbReference type="PANTHER" id="PTHR43790:SF7">
    <property type="entry name" value="GALACTOSE_METHYL GALACTOSIDE IMPORT ATP-BINDING PROTEIN MGLA"/>
    <property type="match status" value="1"/>
</dbReference>
<dbReference type="Pfam" id="PF00005">
    <property type="entry name" value="ABC_tran"/>
    <property type="match status" value="2"/>
</dbReference>
<dbReference type="SMART" id="SM00382">
    <property type="entry name" value="AAA"/>
    <property type="match status" value="2"/>
</dbReference>
<dbReference type="SUPFAM" id="SSF52540">
    <property type="entry name" value="P-loop containing nucleoside triphosphate hydrolases"/>
    <property type="match status" value="2"/>
</dbReference>
<dbReference type="PROSITE" id="PS00211">
    <property type="entry name" value="ABC_TRANSPORTER_1"/>
    <property type="match status" value="1"/>
</dbReference>
<dbReference type="PROSITE" id="PS50893">
    <property type="entry name" value="ABC_TRANSPORTER_2"/>
    <property type="match status" value="2"/>
</dbReference>
<dbReference type="PROSITE" id="PS51260">
    <property type="entry name" value="MGLA"/>
    <property type="match status" value="1"/>
</dbReference>
<keyword id="KW-0067">ATP-binding</keyword>
<keyword id="KW-0997">Cell inner membrane</keyword>
<keyword id="KW-1003">Cell membrane</keyword>
<keyword id="KW-0472">Membrane</keyword>
<keyword id="KW-0547">Nucleotide-binding</keyword>
<keyword id="KW-0677">Repeat</keyword>
<keyword id="KW-0762">Sugar transport</keyword>
<keyword id="KW-1278">Translocase</keyword>
<keyword id="KW-0813">Transport</keyword>
<sequence length="506" mass="56949">MADINTAQPRDWLLEMSNIDKSFPGVKALDNVNLKVRPYSIHALMGENGAGKSTLLKCLFGIYKKDSGSIIFQGQEIEFKSSKEALEQGVSMVHQELNLVLQRTVMDNMWLGRYPTKGFFVDQDKMYKETKAIFDELDIDIDPRDKVATLSVSQMQMIEIAKAFSYNAKIVIMDEPTSSLTEKEVNHLFTIIRKLKARGCGIVYISHKMEEIFQLCDEITILRDGQWITTQPLDGLTMDQIISMMVGRSLSQRFPDRLNKPGEVILEVKNLTSLRQPSIRDVSFDLHKGEILGIAGLVGAKRTDIVETLFGIREKVTGTIKLHGKNINNHSANEAINHGFALVTEERRSTGIYAYLDISFNSLISNIRNYKNKFGLLDNTRMKSDTQWVIDAMRVKTPGHRTNIGSLSGGNQQKVIIGRWLLTQPEILMLDEPTRGIDVGAKFEIYQLMTELAKKDKGIIIISSEMPELLGITDRILVMSNGQVAGIVDTKQTTQNEILRLASLHL</sequence>
<gene>
    <name evidence="1" type="primary">mglA</name>
    <name type="ordered locus">YPA_0803</name>
</gene>
<reference key="1">
    <citation type="journal article" date="2006" name="J. Bacteriol.">
        <title>Complete genome sequence of Yersinia pestis strains Antiqua and Nepal516: evidence of gene reduction in an emerging pathogen.</title>
        <authorList>
            <person name="Chain P.S.G."/>
            <person name="Hu P."/>
            <person name="Malfatti S.A."/>
            <person name="Radnedge L."/>
            <person name="Larimer F."/>
            <person name="Vergez L.M."/>
            <person name="Worsham P."/>
            <person name="Chu M.C."/>
            <person name="Andersen G.L."/>
        </authorList>
    </citation>
    <scope>NUCLEOTIDE SEQUENCE [LARGE SCALE GENOMIC DNA]</scope>
    <source>
        <strain>Antiqua</strain>
    </source>
</reference>
<proteinExistence type="inferred from homology"/>